<comment type="subcellular location">
    <subcellularLocation>
        <location evidence="1">Secreted</location>
    </subcellularLocation>
</comment>
<comment type="tissue specificity">
    <text evidence="5">Expressed in the middle and posterior regions of the follicle cells.</text>
</comment>
<comment type="developmental stage">
    <text evidence="4 5">Synthesized and released from follicular epithelium 18-24 hours after a blood meal.</text>
</comment>
<comment type="similarity">
    <text evidence="2">Belongs to the vitelline membrane family.</text>
</comment>
<comment type="sequence caution" evidence="7">
    <conflict type="erroneous initiation">
        <sequence resource="EMBL-CDS" id="EAT34764"/>
    </conflict>
    <text>Extended N-terminus.</text>
</comment>
<gene>
    <name evidence="8" type="primary">15a-1</name>
    <name type="ORF">AAEL013027</name>
</gene>
<sequence length="108" mass="11384">MNKFIILAIFALAVGAMADYPKPAYHAPPPPPPHHLHAHPAPAPVVHTYPVHAPHAKCGANLLVGCAPSVAHVPCVPLPGHAPAHGYGHAPAPHYRAPESDSFDQFEE</sequence>
<accession>Q16KE2</accession>
<accession>O02541</accession>
<accession>Q26290</accession>
<keyword id="KW-1185">Reference proteome</keyword>
<keyword id="KW-0964">Secreted</keyword>
<keyword id="KW-0732">Signal</keyword>
<evidence type="ECO:0000250" key="1">
    <source>
        <dbReference type="UniProtKB" id="P19425"/>
    </source>
</evidence>
<evidence type="ECO:0000255" key="2"/>
<evidence type="ECO:0000256" key="3">
    <source>
        <dbReference type="SAM" id="MobiDB-lite"/>
    </source>
</evidence>
<evidence type="ECO:0000269" key="4">
    <source>
    </source>
</evidence>
<evidence type="ECO:0000269" key="5">
    <source>
    </source>
</evidence>
<evidence type="ECO:0000303" key="6">
    <source>
    </source>
</evidence>
<evidence type="ECO:0000305" key="7"/>
<evidence type="ECO:0000312" key="8">
    <source>
        <dbReference type="EMBL" id="AAB25306.1"/>
    </source>
</evidence>
<evidence type="ECO:0000312" key="9">
    <source>
        <dbReference type="EMBL" id="AAB51282.1"/>
    </source>
</evidence>
<evidence type="ECO:0000312" key="10">
    <source>
        <dbReference type="EMBL" id="EAT34764.1"/>
    </source>
</evidence>
<protein>
    <recommendedName>
        <fullName evidence="6">Vitelline membrane protein 15a-1</fullName>
    </recommendedName>
</protein>
<organism>
    <name type="scientific">Aedes aegypti</name>
    <name type="common">Yellowfever mosquito</name>
    <name type="synonym">Culex aegypti</name>
    <dbReference type="NCBI Taxonomy" id="7159"/>
    <lineage>
        <taxon>Eukaryota</taxon>
        <taxon>Metazoa</taxon>
        <taxon>Ecdysozoa</taxon>
        <taxon>Arthropoda</taxon>
        <taxon>Hexapoda</taxon>
        <taxon>Insecta</taxon>
        <taxon>Pterygota</taxon>
        <taxon>Neoptera</taxon>
        <taxon>Endopterygota</taxon>
        <taxon>Diptera</taxon>
        <taxon>Nematocera</taxon>
        <taxon>Culicoidea</taxon>
        <taxon>Culicidae</taxon>
        <taxon>Culicinae</taxon>
        <taxon>Aedini</taxon>
        <taxon>Aedes</taxon>
        <taxon>Stegomyia</taxon>
    </lineage>
</organism>
<proteinExistence type="evidence at transcript level"/>
<name>V15A1_AEDAE</name>
<dbReference type="EMBL" id="S54555">
    <property type="protein sequence ID" value="AAB25306.1"/>
    <property type="molecule type" value="mRNA"/>
</dbReference>
<dbReference type="EMBL" id="U91680">
    <property type="protein sequence ID" value="AAB51282.1"/>
    <property type="molecule type" value="Genomic_DNA"/>
</dbReference>
<dbReference type="EMBL" id="CH477963">
    <property type="protein sequence ID" value="EAT34764.1"/>
    <property type="status" value="ALT_INIT"/>
    <property type="molecule type" value="Genomic_DNA"/>
</dbReference>
<dbReference type="PIR" id="A48831">
    <property type="entry name" value="A48831"/>
</dbReference>
<dbReference type="RefSeq" id="XP_001663218.1">
    <property type="nucleotide sequence ID" value="XM_001663168.1"/>
</dbReference>
<dbReference type="STRING" id="7159.Q16KE2"/>
<dbReference type="PaxDb" id="7159-AAEL013027-PA"/>
<dbReference type="EnsemblMetazoa" id="AAEL013027-RA">
    <property type="protein sequence ID" value="AAEL013027-PA"/>
    <property type="gene ID" value="AAEL013027"/>
</dbReference>
<dbReference type="GeneID" id="5577129"/>
<dbReference type="KEGG" id="aag:5577129"/>
<dbReference type="VEuPathDB" id="VectorBase:AAEL013027"/>
<dbReference type="eggNOG" id="ENOG502T8X3">
    <property type="taxonomic scope" value="Eukaryota"/>
</dbReference>
<dbReference type="HOGENOM" id="CLU_144558_0_0_1"/>
<dbReference type="InParanoid" id="Q16KE2"/>
<dbReference type="Proteomes" id="UP000008820">
    <property type="component" value="Chromosome 2"/>
</dbReference>
<dbReference type="Proteomes" id="UP000682892">
    <property type="component" value="Chromosome 2"/>
</dbReference>
<dbReference type="GO" id="GO:0005615">
    <property type="term" value="C:extracellular space"/>
    <property type="evidence" value="ECO:0000250"/>
    <property type="project" value="UniProtKB"/>
</dbReference>
<dbReference type="GO" id="GO:0004867">
    <property type="term" value="F:serine-type endopeptidase inhibitor activity"/>
    <property type="evidence" value="ECO:0000250"/>
    <property type="project" value="UniProtKB"/>
</dbReference>
<dbReference type="GO" id="GO:0048599">
    <property type="term" value="P:oocyte development"/>
    <property type="evidence" value="ECO:0000250"/>
    <property type="project" value="UniProtKB"/>
</dbReference>
<reference evidence="7 8" key="1">
    <citation type="journal article" date="1993" name="Dev. Biol.">
        <title>Structure, expression, and hormonal control of genes from the mosquito, Aedes aegypti, which encode proteins similar to the vitelline membrane proteins of Drosophila melanogaster.</title>
        <authorList>
            <person name="Lin Y."/>
            <person name="Hamblin M.T."/>
            <person name="Edwards M.J."/>
            <person name="Barillas-Mury C."/>
            <person name="Kanost M.R."/>
            <person name="Knipple D.C."/>
            <person name="Wolfner M.F."/>
            <person name="Hagedorn H.H."/>
        </authorList>
    </citation>
    <scope>NUCLEOTIDE SEQUENCE [MRNA]</scope>
    <scope>DEVELOPMENTAL STAGE</scope>
</reference>
<reference evidence="7 9" key="2">
    <citation type="journal article" date="1998" name="Insect Biochem. Mol. Biol.">
        <title>Vitelline envelope genes of the yellow fever mosquito, Aedes aegypti.</title>
        <authorList>
            <person name="Edwards M.J."/>
            <person name="Severson D.W."/>
            <person name="Hagedorn H.H."/>
        </authorList>
    </citation>
    <scope>NUCLEOTIDE SEQUENCE [GENOMIC DNA]</scope>
    <scope>TISSUE SPECIFICITY</scope>
    <scope>DEVELOPMENTAL STAGE</scope>
    <source>
        <strain evidence="9">Rockefeller</strain>
    </source>
</reference>
<reference evidence="10" key="3">
    <citation type="journal article" date="2007" name="Science">
        <title>Genome sequence of Aedes aegypti, a major arbovirus vector.</title>
        <authorList>
            <person name="Nene V."/>
            <person name="Wortman J.R."/>
            <person name="Lawson D."/>
            <person name="Haas B.J."/>
            <person name="Kodira C.D."/>
            <person name="Tu Z.J."/>
            <person name="Loftus B.J."/>
            <person name="Xi Z."/>
            <person name="Megy K."/>
            <person name="Grabherr M."/>
            <person name="Ren Q."/>
            <person name="Zdobnov E.M."/>
            <person name="Lobo N.F."/>
            <person name="Campbell K.S."/>
            <person name="Brown S.E."/>
            <person name="Bonaldo M.F."/>
            <person name="Zhu J."/>
            <person name="Sinkins S.P."/>
            <person name="Hogenkamp D.G."/>
            <person name="Amedeo P."/>
            <person name="Arensburger P."/>
            <person name="Atkinson P.W."/>
            <person name="Bidwell S.L."/>
            <person name="Biedler J."/>
            <person name="Birney E."/>
            <person name="Bruggner R.V."/>
            <person name="Costas J."/>
            <person name="Coy M.R."/>
            <person name="Crabtree J."/>
            <person name="Crawford M."/>
            <person name="DeBruyn B."/>
            <person name="DeCaprio D."/>
            <person name="Eiglmeier K."/>
            <person name="Eisenstadt E."/>
            <person name="El-Dorry H."/>
            <person name="Gelbart W.M."/>
            <person name="Gomes S.L."/>
            <person name="Hammond M."/>
            <person name="Hannick L.I."/>
            <person name="Hogan J.R."/>
            <person name="Holmes M.H."/>
            <person name="Jaffe D."/>
            <person name="Johnston S.J."/>
            <person name="Kennedy R.C."/>
            <person name="Koo H."/>
            <person name="Kravitz S."/>
            <person name="Kriventseva E.V."/>
            <person name="Kulp D."/>
            <person name="Labutti K."/>
            <person name="Lee E."/>
            <person name="Li S."/>
            <person name="Lovin D.D."/>
            <person name="Mao C."/>
            <person name="Mauceli E."/>
            <person name="Menck C.F."/>
            <person name="Miller J.R."/>
            <person name="Montgomery P."/>
            <person name="Mori A."/>
            <person name="Nascimento A.L."/>
            <person name="Naveira H.F."/>
            <person name="Nusbaum C."/>
            <person name="O'Leary S.B."/>
            <person name="Orvis J."/>
            <person name="Pertea M."/>
            <person name="Quesneville H."/>
            <person name="Reidenbach K.R."/>
            <person name="Rogers Y.-H.C."/>
            <person name="Roth C.W."/>
            <person name="Schneider J.R."/>
            <person name="Schatz M."/>
            <person name="Shumway M."/>
            <person name="Stanke M."/>
            <person name="Stinson E.O."/>
            <person name="Tubio J.M.C."/>
            <person name="Vanzee J.P."/>
            <person name="Verjovski-Almeida S."/>
            <person name="Werner D."/>
            <person name="White O.R."/>
            <person name="Wyder S."/>
            <person name="Zeng Q."/>
            <person name="Zhao Q."/>
            <person name="Zhao Y."/>
            <person name="Hill C.A."/>
            <person name="Raikhel A.S."/>
            <person name="Soares M.B."/>
            <person name="Knudson D.L."/>
            <person name="Lee N.H."/>
            <person name="Galagan J."/>
            <person name="Salzberg S.L."/>
            <person name="Paulsen I.T."/>
            <person name="Dimopoulos G."/>
            <person name="Collins F.H."/>
            <person name="Bruce B."/>
            <person name="Fraser-Liggett C.M."/>
            <person name="Severson D.W."/>
        </authorList>
    </citation>
    <scope>NUCLEOTIDE SEQUENCE [LARGE SCALE GENOMIC DNA]</scope>
    <source>
        <strain>LVPib12</strain>
    </source>
</reference>
<feature type="signal peptide" evidence="2">
    <location>
        <begin position="1"/>
        <end position="18"/>
    </location>
</feature>
<feature type="chain" id="PRO_0000399502" description="Vitelline membrane protein 15a-1" evidence="2">
    <location>
        <begin position="19"/>
        <end position="108"/>
    </location>
</feature>
<feature type="domain" description="VM">
    <location>
        <begin position="52"/>
        <end position="88"/>
    </location>
</feature>
<feature type="region of interest" description="Disordered" evidence="3">
    <location>
        <begin position="87"/>
        <end position="108"/>
    </location>
</feature>